<sequence>MNQNKNNNNKNPKINLLIIGCGCIGLSTGIIALKSGNYKSVSIWAKDLPPNTTSNKAAALWYPFLCNPLDLVGKWSAETMQYYKDHIINDPKSGTITKKVNEIFRRPHPEDPEWKPYIKSFRRARKDELPDGYVDGYAIDDGFVMDTDMYMDYLVDQFKSLGGIIEQRHLVDIREAFVDHDVVVNCTGLGSRELFNDRTIYPGRGQIIVIKNSTDRSIMDEEDHIAYVIPRLTNTVLGGTNQEHDYNTNPTKKDTEEILKRVAMISPRFAKNRIEIQGVKVGLRPARHEIRLENEFFEGGSKLVVHNYGHGGSGFTVSWGCAIEAIKLVDQGLPKLLHFNKLISKL</sequence>
<name>OXDA_DICDI</name>
<dbReference type="EC" id="1.4.3.3" evidence="5"/>
<dbReference type="EMBL" id="AAFI02000011">
    <property type="protein sequence ID" value="EAL70582.1"/>
    <property type="molecule type" value="Genomic_DNA"/>
</dbReference>
<dbReference type="EMBL" id="AAFI02000009">
    <property type="protein sequence ID" value="EAL70863.1"/>
    <property type="molecule type" value="Genomic_DNA"/>
</dbReference>
<dbReference type="RefSeq" id="XP_644508.1">
    <property type="nucleotide sequence ID" value="XM_639416.1"/>
</dbReference>
<dbReference type="RefSeq" id="XP_644742.1">
    <property type="nucleotide sequence ID" value="XM_639650.1"/>
</dbReference>
<dbReference type="SMR" id="Q556W1"/>
<dbReference type="FunCoup" id="Q556W1">
    <property type="interactions" value="85"/>
</dbReference>
<dbReference type="STRING" id="44689.Q556W1"/>
<dbReference type="GlyCosmos" id="Q556W1">
    <property type="glycosylation" value="3 sites, No reported glycans"/>
</dbReference>
<dbReference type="PaxDb" id="44689-DDB0238431"/>
<dbReference type="EnsemblProtists" id="EAL70582">
    <property type="protein sequence ID" value="EAL70582"/>
    <property type="gene ID" value="DDB_G0273783"/>
</dbReference>
<dbReference type="EnsemblProtists" id="EAL70863">
    <property type="protein sequence ID" value="EAL70863"/>
    <property type="gene ID" value="DDB_G0273291"/>
</dbReference>
<dbReference type="GeneID" id="8618842"/>
<dbReference type="GeneID" id="8619134"/>
<dbReference type="KEGG" id="ddi:DDB_G0273291"/>
<dbReference type="KEGG" id="ddi:DDB_G0273783"/>
<dbReference type="dictyBase" id="DDB_G0273291">
    <property type="gene designation" value="ddo-1"/>
</dbReference>
<dbReference type="dictyBase" id="DDB_G0273783">
    <property type="gene designation" value="ddo-2"/>
</dbReference>
<dbReference type="VEuPathDB" id="AmoebaDB:DDB_G0273783"/>
<dbReference type="eggNOG" id="KOG3923">
    <property type="taxonomic scope" value="Eukaryota"/>
</dbReference>
<dbReference type="HOGENOM" id="CLU_034311_0_0_1"/>
<dbReference type="InParanoid" id="Q556W1"/>
<dbReference type="OMA" id="DLWELQP"/>
<dbReference type="PhylomeDB" id="Q556W1"/>
<dbReference type="Reactome" id="R-DDI-389661">
    <property type="pathway name" value="Glyoxylate metabolism and glycine degradation"/>
</dbReference>
<dbReference type="Reactome" id="R-DDI-9033241">
    <property type="pathway name" value="Peroxisomal protein import"/>
</dbReference>
<dbReference type="PRO" id="PR:Q556W1"/>
<dbReference type="Proteomes" id="UP000002195">
    <property type="component" value="Chromosome 2"/>
</dbReference>
<dbReference type="GO" id="GO:0005737">
    <property type="term" value="C:cytoplasm"/>
    <property type="evidence" value="ECO:0000318"/>
    <property type="project" value="GO_Central"/>
</dbReference>
<dbReference type="GO" id="GO:0005782">
    <property type="term" value="C:peroxisomal matrix"/>
    <property type="evidence" value="ECO:0000250"/>
    <property type="project" value="UniProtKB"/>
</dbReference>
<dbReference type="GO" id="GO:0003884">
    <property type="term" value="F:D-amino-acid oxidase activity"/>
    <property type="evidence" value="ECO:0000314"/>
    <property type="project" value="dictyBase"/>
</dbReference>
<dbReference type="GO" id="GO:0008445">
    <property type="term" value="F:D-aspartate oxidase activity"/>
    <property type="evidence" value="ECO:0000250"/>
    <property type="project" value="UniProtKB"/>
</dbReference>
<dbReference type="GO" id="GO:0071949">
    <property type="term" value="F:FAD binding"/>
    <property type="evidence" value="ECO:0000250"/>
    <property type="project" value="UniProtKB"/>
</dbReference>
<dbReference type="GO" id="GO:0043799">
    <property type="term" value="F:glycine oxidase activity"/>
    <property type="evidence" value="ECO:0007669"/>
    <property type="project" value="RHEA"/>
</dbReference>
<dbReference type="GO" id="GO:0019478">
    <property type="term" value="P:D-amino acid catabolic process"/>
    <property type="evidence" value="ECO:0000250"/>
    <property type="project" value="UniProtKB"/>
</dbReference>
<dbReference type="GO" id="GO:0007586">
    <property type="term" value="P:digestion"/>
    <property type="evidence" value="ECO:0000250"/>
    <property type="project" value="UniProtKB"/>
</dbReference>
<dbReference type="Gene3D" id="3.30.9.10">
    <property type="entry name" value="D-Amino Acid Oxidase, subunit A, domain 2"/>
    <property type="match status" value="1"/>
</dbReference>
<dbReference type="Gene3D" id="3.40.50.720">
    <property type="entry name" value="NAD(P)-binding Rossmann-like Domain"/>
    <property type="match status" value="1"/>
</dbReference>
<dbReference type="InterPro" id="IPR006181">
    <property type="entry name" value="D-amino_acid_oxidase_CS"/>
</dbReference>
<dbReference type="InterPro" id="IPR023209">
    <property type="entry name" value="DAO"/>
</dbReference>
<dbReference type="InterPro" id="IPR006076">
    <property type="entry name" value="FAD-dep_OxRdtase"/>
</dbReference>
<dbReference type="PANTHER" id="PTHR11530">
    <property type="entry name" value="D-AMINO ACID OXIDASE"/>
    <property type="match status" value="1"/>
</dbReference>
<dbReference type="PANTHER" id="PTHR11530:SF11">
    <property type="entry name" value="D-ASPARTATE OXIDASE"/>
    <property type="match status" value="1"/>
</dbReference>
<dbReference type="Pfam" id="PF01266">
    <property type="entry name" value="DAO"/>
    <property type="match status" value="1"/>
</dbReference>
<dbReference type="PIRSF" id="PIRSF000189">
    <property type="entry name" value="D-aa_oxidase"/>
    <property type="match status" value="1"/>
</dbReference>
<dbReference type="SUPFAM" id="SSF54373">
    <property type="entry name" value="FAD-linked reductases, C-terminal domain"/>
    <property type="match status" value="1"/>
</dbReference>
<dbReference type="SUPFAM" id="SSF51971">
    <property type="entry name" value="Nucleotide-binding domain"/>
    <property type="match status" value="1"/>
</dbReference>
<dbReference type="PROSITE" id="PS00677">
    <property type="entry name" value="DAO"/>
    <property type="match status" value="1"/>
</dbReference>
<organism>
    <name type="scientific">Dictyostelium discoideum</name>
    <name type="common">Social amoeba</name>
    <dbReference type="NCBI Taxonomy" id="44689"/>
    <lineage>
        <taxon>Eukaryota</taxon>
        <taxon>Amoebozoa</taxon>
        <taxon>Evosea</taxon>
        <taxon>Eumycetozoa</taxon>
        <taxon>Dictyostelia</taxon>
        <taxon>Dictyosteliales</taxon>
        <taxon>Dictyosteliaceae</taxon>
        <taxon>Dictyostelium</taxon>
    </lineage>
</organism>
<reference key="1">
    <citation type="journal article" date="2002" name="Nature">
        <title>Sequence and analysis of chromosome 2 of Dictyostelium discoideum.</title>
        <authorList>
            <person name="Gloeckner G."/>
            <person name="Eichinger L."/>
            <person name="Szafranski K."/>
            <person name="Pachebat J.A."/>
            <person name="Bankier A.T."/>
            <person name="Dear P.H."/>
            <person name="Lehmann R."/>
            <person name="Baumgart C."/>
            <person name="Parra G."/>
            <person name="Abril J.F."/>
            <person name="Guigo R."/>
            <person name="Kumpf K."/>
            <person name="Tunggal B."/>
            <person name="Cox E.C."/>
            <person name="Quail M.A."/>
            <person name="Platzer M."/>
            <person name="Rosenthal A."/>
            <person name="Noegel A.A."/>
        </authorList>
    </citation>
    <scope>NUCLEOTIDE SEQUENCE [LARGE SCALE GENOMIC DNA]</scope>
    <source>
        <strain>AX4</strain>
    </source>
</reference>
<reference key="2">
    <citation type="journal article" date="2005" name="Nature">
        <title>The genome of the social amoeba Dictyostelium discoideum.</title>
        <authorList>
            <person name="Eichinger L."/>
            <person name="Pachebat J.A."/>
            <person name="Gloeckner G."/>
            <person name="Rajandream M.A."/>
            <person name="Sucgang R."/>
            <person name="Berriman M."/>
            <person name="Song J."/>
            <person name="Olsen R."/>
            <person name="Szafranski K."/>
            <person name="Xu Q."/>
            <person name="Tunggal B."/>
            <person name="Kummerfeld S."/>
            <person name="Madera M."/>
            <person name="Konfortov B.A."/>
            <person name="Rivero F."/>
            <person name="Bankier A.T."/>
            <person name="Lehmann R."/>
            <person name="Hamlin N."/>
            <person name="Davies R."/>
            <person name="Gaudet P."/>
            <person name="Fey P."/>
            <person name="Pilcher K."/>
            <person name="Chen G."/>
            <person name="Saunders D."/>
            <person name="Sodergren E.J."/>
            <person name="Davis P."/>
            <person name="Kerhornou A."/>
            <person name="Nie X."/>
            <person name="Hall N."/>
            <person name="Anjard C."/>
            <person name="Hemphill L."/>
            <person name="Bason N."/>
            <person name="Farbrother P."/>
            <person name="Desany B."/>
            <person name="Just E."/>
            <person name="Morio T."/>
            <person name="Rost R."/>
            <person name="Churcher C.M."/>
            <person name="Cooper J."/>
            <person name="Haydock S."/>
            <person name="van Driessche N."/>
            <person name="Cronin A."/>
            <person name="Goodhead I."/>
            <person name="Muzny D.M."/>
            <person name="Mourier T."/>
            <person name="Pain A."/>
            <person name="Lu M."/>
            <person name="Harper D."/>
            <person name="Lindsay R."/>
            <person name="Hauser H."/>
            <person name="James K.D."/>
            <person name="Quiles M."/>
            <person name="Madan Babu M."/>
            <person name="Saito T."/>
            <person name="Buchrieser C."/>
            <person name="Wardroper A."/>
            <person name="Felder M."/>
            <person name="Thangavelu M."/>
            <person name="Johnson D."/>
            <person name="Knights A."/>
            <person name="Loulseged H."/>
            <person name="Mungall K.L."/>
            <person name="Oliver K."/>
            <person name="Price C."/>
            <person name="Quail M.A."/>
            <person name="Urushihara H."/>
            <person name="Hernandez J."/>
            <person name="Rabbinowitsch E."/>
            <person name="Steffen D."/>
            <person name="Sanders M."/>
            <person name="Ma J."/>
            <person name="Kohara Y."/>
            <person name="Sharp S."/>
            <person name="Simmonds M.N."/>
            <person name="Spiegler S."/>
            <person name="Tivey A."/>
            <person name="Sugano S."/>
            <person name="White B."/>
            <person name="Walker D."/>
            <person name="Woodward J.R."/>
            <person name="Winckler T."/>
            <person name="Tanaka Y."/>
            <person name="Shaulsky G."/>
            <person name="Schleicher M."/>
            <person name="Weinstock G.M."/>
            <person name="Rosenthal A."/>
            <person name="Cox E.C."/>
            <person name="Chisholm R.L."/>
            <person name="Gibbs R.A."/>
            <person name="Loomis W.F."/>
            <person name="Platzer M."/>
            <person name="Kay R.R."/>
            <person name="Williams J.G."/>
            <person name="Dear P.H."/>
            <person name="Noegel A.A."/>
            <person name="Barrell B.G."/>
            <person name="Kuspa A."/>
        </authorList>
    </citation>
    <scope>NUCLEOTIDE SEQUENCE [LARGE SCALE GENOMIC DNA]</scope>
    <source>
        <strain>AX4</strain>
    </source>
</reference>
<reference key="3">
    <citation type="journal article" date="2018" name="Front. Microbiol.">
        <title>D-Serine Metabolism and Its Importance in Development of Dictyostelium discoideum.</title>
        <authorList>
            <person name="Ito T."/>
            <person name="Hamauchi N."/>
            <person name="Hagi T."/>
            <person name="Morohashi N."/>
            <person name="Hemmi H."/>
            <person name="Sato Y.G."/>
            <person name="Saito T."/>
            <person name="Yoshimura T."/>
        </authorList>
    </citation>
    <scope>FUNCTION</scope>
    <scope>CATALYTIC ACTIVITY</scope>
    <scope>COFACTOR</scope>
    <scope>BIOPHYSICOCHEMICAL PROPERTIES</scope>
</reference>
<accession>Q556W1</accession>
<accession>Q86JV2</accession>
<protein>
    <recommendedName>
        <fullName evidence="6">D-amino-acid oxidase</fullName>
        <shortName evidence="6">DAAO</shortName>
        <shortName evidence="6">DAMOX</shortName>
        <shortName evidence="6">DAO</shortName>
        <ecNumber evidence="5">1.4.3.3</ecNumber>
    </recommendedName>
</protein>
<gene>
    <name type="primary">ddo-1</name>
    <name type="ORF">DDB_G0273783</name>
</gene>
<gene>
    <name type="primary">ddo-2</name>
    <name type="ORF">DDB_G0273291</name>
</gene>
<evidence type="ECO:0000250" key="1">
    <source>
        <dbReference type="UniProtKB" id="C4R4G9"/>
    </source>
</evidence>
<evidence type="ECO:0000250" key="2">
    <source>
        <dbReference type="UniProtKB" id="P00371"/>
    </source>
</evidence>
<evidence type="ECO:0000250" key="3">
    <source>
        <dbReference type="UniProtKB" id="P14920"/>
    </source>
</evidence>
<evidence type="ECO:0000255" key="4"/>
<evidence type="ECO:0000269" key="5">
    <source>
    </source>
</evidence>
<evidence type="ECO:0000305" key="6"/>
<comment type="function">
    <text evidence="5">Catalyzes the oxidative deamination of D-amino acids with broad substrate specificity (PubMed:29740415). Has low in vitro and no in vivo activity on D-serine; primary D-serine degradation is performed by the D-serine dehydratase dsd (PubMed:29740415).</text>
</comment>
<comment type="catalytic activity">
    <reaction evidence="5">
        <text>a D-alpha-amino acid + O2 + H2O = a 2-oxocarboxylate + H2O2 + NH4(+)</text>
        <dbReference type="Rhea" id="RHEA:21816"/>
        <dbReference type="ChEBI" id="CHEBI:15377"/>
        <dbReference type="ChEBI" id="CHEBI:15379"/>
        <dbReference type="ChEBI" id="CHEBI:16240"/>
        <dbReference type="ChEBI" id="CHEBI:28938"/>
        <dbReference type="ChEBI" id="CHEBI:35179"/>
        <dbReference type="ChEBI" id="CHEBI:59871"/>
        <dbReference type="EC" id="1.4.3.3"/>
    </reaction>
    <physiologicalReaction direction="left-to-right" evidence="5">
        <dbReference type="Rhea" id="RHEA:21817"/>
    </physiologicalReaction>
</comment>
<comment type="catalytic activity">
    <reaction evidence="5">
        <text>D-serine + O2 + H2O = 3-hydroxypyruvate + H2O2 + NH4(+)</text>
        <dbReference type="Rhea" id="RHEA:70951"/>
        <dbReference type="ChEBI" id="CHEBI:15377"/>
        <dbReference type="ChEBI" id="CHEBI:15379"/>
        <dbReference type="ChEBI" id="CHEBI:16240"/>
        <dbReference type="ChEBI" id="CHEBI:17180"/>
        <dbReference type="ChEBI" id="CHEBI:28938"/>
        <dbReference type="ChEBI" id="CHEBI:35247"/>
    </reaction>
    <physiologicalReaction direction="left-to-right" evidence="5">
        <dbReference type="Rhea" id="RHEA:70952"/>
    </physiologicalReaction>
</comment>
<comment type="catalytic activity">
    <reaction evidence="5">
        <text>D-phenylalanine + O2 + H2O = 3-phenylpyruvate + H2O2 + NH4(+)</text>
        <dbReference type="Rhea" id="RHEA:70963"/>
        <dbReference type="ChEBI" id="CHEBI:15377"/>
        <dbReference type="ChEBI" id="CHEBI:15379"/>
        <dbReference type="ChEBI" id="CHEBI:16240"/>
        <dbReference type="ChEBI" id="CHEBI:18005"/>
        <dbReference type="ChEBI" id="CHEBI:28938"/>
        <dbReference type="ChEBI" id="CHEBI:57981"/>
    </reaction>
    <physiologicalReaction direction="left-to-right" evidence="5">
        <dbReference type="Rhea" id="RHEA:70964"/>
    </physiologicalReaction>
</comment>
<comment type="catalytic activity">
    <reaction evidence="5">
        <text>D-alanine + O2 + H2O = pyruvate + H2O2 + NH4(+)</text>
        <dbReference type="Rhea" id="RHEA:22688"/>
        <dbReference type="ChEBI" id="CHEBI:15361"/>
        <dbReference type="ChEBI" id="CHEBI:15377"/>
        <dbReference type="ChEBI" id="CHEBI:15379"/>
        <dbReference type="ChEBI" id="CHEBI:16240"/>
        <dbReference type="ChEBI" id="CHEBI:28938"/>
        <dbReference type="ChEBI" id="CHEBI:57416"/>
    </reaction>
    <physiologicalReaction direction="left-to-right" evidence="5">
        <dbReference type="Rhea" id="RHEA:22689"/>
    </physiologicalReaction>
</comment>
<comment type="catalytic activity">
    <reaction evidence="5">
        <text>D-arginine + O2 + H2O = 5-guanidino-2-oxopentanoate + H2O2 + NH4(+)</text>
        <dbReference type="Rhea" id="RHEA:78219"/>
        <dbReference type="ChEBI" id="CHEBI:15377"/>
        <dbReference type="ChEBI" id="CHEBI:15379"/>
        <dbReference type="ChEBI" id="CHEBI:16240"/>
        <dbReference type="ChEBI" id="CHEBI:28938"/>
        <dbReference type="ChEBI" id="CHEBI:32689"/>
        <dbReference type="ChEBI" id="CHEBI:58489"/>
    </reaction>
    <physiologicalReaction direction="left-to-right" evidence="5">
        <dbReference type="Rhea" id="RHEA:78220"/>
    </physiologicalReaction>
</comment>
<comment type="catalytic activity">
    <reaction evidence="5">
        <text>D-methionine + O2 + H2O = 4-methylsulfanyl-2-oxobutanoate + H2O2 + NH4(+)</text>
        <dbReference type="Rhea" id="RHEA:78207"/>
        <dbReference type="ChEBI" id="CHEBI:15377"/>
        <dbReference type="ChEBI" id="CHEBI:15379"/>
        <dbReference type="ChEBI" id="CHEBI:16240"/>
        <dbReference type="ChEBI" id="CHEBI:16723"/>
        <dbReference type="ChEBI" id="CHEBI:28938"/>
        <dbReference type="ChEBI" id="CHEBI:57932"/>
    </reaction>
    <physiologicalReaction direction="left-to-right" evidence="5">
        <dbReference type="Rhea" id="RHEA:78208"/>
    </physiologicalReaction>
</comment>
<comment type="catalytic activity">
    <reaction evidence="5">
        <text>D-ornithine + O2 + H2O = 5-amino-2-oxopentanoate + H2O2 + NH4(+)</text>
        <dbReference type="Rhea" id="RHEA:78255"/>
        <dbReference type="ChEBI" id="CHEBI:15377"/>
        <dbReference type="ChEBI" id="CHEBI:15379"/>
        <dbReference type="ChEBI" id="CHEBI:16240"/>
        <dbReference type="ChEBI" id="CHEBI:28938"/>
        <dbReference type="ChEBI" id="CHEBI:57668"/>
        <dbReference type="ChEBI" id="CHEBI:58802"/>
    </reaction>
    <physiologicalReaction direction="left-to-right" evidence="5">
        <dbReference type="Rhea" id="RHEA:78256"/>
    </physiologicalReaction>
</comment>
<comment type="catalytic activity">
    <reaction evidence="5">
        <text>D-leucine + O2 + H2O = 4-methyl-2-oxopentanoate + H2O2 + NH4(+)</text>
        <dbReference type="Rhea" id="RHEA:78211"/>
        <dbReference type="ChEBI" id="CHEBI:15377"/>
        <dbReference type="ChEBI" id="CHEBI:15379"/>
        <dbReference type="ChEBI" id="CHEBI:16240"/>
        <dbReference type="ChEBI" id="CHEBI:17865"/>
        <dbReference type="ChEBI" id="CHEBI:28938"/>
        <dbReference type="ChEBI" id="CHEBI:143079"/>
    </reaction>
    <physiologicalReaction direction="left-to-right" evidence="5">
        <dbReference type="Rhea" id="RHEA:78212"/>
    </physiologicalReaction>
</comment>
<comment type="catalytic activity">
    <reaction evidence="5">
        <text>D-lysine + O2 + H2O = 6-amino-2-oxohexanoate + H2O2 + NH4(+)</text>
        <dbReference type="Rhea" id="RHEA:37583"/>
        <dbReference type="ChEBI" id="CHEBI:15377"/>
        <dbReference type="ChEBI" id="CHEBI:15379"/>
        <dbReference type="ChEBI" id="CHEBI:16240"/>
        <dbReference type="ChEBI" id="CHEBI:28938"/>
        <dbReference type="ChEBI" id="CHEBI:32557"/>
        <dbReference type="ChEBI" id="CHEBI:58183"/>
        <dbReference type="EC" id="1.4.3.3"/>
    </reaction>
    <physiologicalReaction direction="left-to-right" evidence="5">
        <dbReference type="Rhea" id="RHEA:37584"/>
    </physiologicalReaction>
</comment>
<comment type="catalytic activity">
    <reaction evidence="5">
        <text>D-proline + O2 = 1-pyrroline-2-carboxylate + H2O2</text>
        <dbReference type="Rhea" id="RHEA:78259"/>
        <dbReference type="ChEBI" id="CHEBI:15379"/>
        <dbReference type="ChEBI" id="CHEBI:16240"/>
        <dbReference type="ChEBI" id="CHEBI:39785"/>
        <dbReference type="ChEBI" id="CHEBI:57726"/>
    </reaction>
    <physiologicalReaction direction="left-to-right" evidence="5">
        <dbReference type="Rhea" id="RHEA:78260"/>
    </physiologicalReaction>
</comment>
<comment type="catalytic activity">
    <reaction evidence="5">
        <text>D-valine + O2 + H2O = 3-methyl-2-oxobutanoate + H2O2 + NH4(+)</text>
        <dbReference type="Rhea" id="RHEA:78203"/>
        <dbReference type="ChEBI" id="CHEBI:11851"/>
        <dbReference type="ChEBI" id="CHEBI:15377"/>
        <dbReference type="ChEBI" id="CHEBI:15379"/>
        <dbReference type="ChEBI" id="CHEBI:16240"/>
        <dbReference type="ChEBI" id="CHEBI:28938"/>
        <dbReference type="ChEBI" id="CHEBI:74338"/>
    </reaction>
    <physiologicalReaction direction="left-to-right" evidence="5">
        <dbReference type="Rhea" id="RHEA:78204"/>
    </physiologicalReaction>
</comment>
<comment type="catalytic activity">
    <reaction evidence="5">
        <text>D-histidine + O2 + H2O = 3-(imidazol-5-yl)pyruvate + H2O2 + NH4(+)</text>
        <dbReference type="Rhea" id="RHEA:78227"/>
        <dbReference type="ChEBI" id="CHEBI:15377"/>
        <dbReference type="ChEBI" id="CHEBI:15379"/>
        <dbReference type="ChEBI" id="CHEBI:16240"/>
        <dbReference type="ChEBI" id="CHEBI:28938"/>
        <dbReference type="ChEBI" id="CHEBI:58133"/>
        <dbReference type="ChEBI" id="CHEBI:142967"/>
    </reaction>
    <physiologicalReaction direction="left-to-right" evidence="5">
        <dbReference type="Rhea" id="RHEA:78228"/>
    </physiologicalReaction>
</comment>
<comment type="cofactor">
    <cofactor evidence="5">
        <name>FAD</name>
        <dbReference type="ChEBI" id="CHEBI:57692"/>
    </cofactor>
</comment>
<comment type="biophysicochemical properties">
    <kinetics>
        <KM evidence="5">0.78 mM for D-alanine (at pH 8.5)</KM>
        <KM evidence="5">6.1 mM for D-serine (at pH 8.5)</KM>
        <text evidence="5">kcat is 0.53 sec(-1) with D-alanine as substrate (at pH 8.5) (PubMed:29740415). kcat is 0.05 sec(-1) with D-serine as substrate (at pH 8.5) (PubMed:29740415).</text>
    </kinetics>
</comment>
<comment type="subcellular location">
    <subcellularLocation>
        <location evidence="1">Peroxisome matrix</location>
    </subcellularLocation>
</comment>
<comment type="similarity">
    <text evidence="6">Belongs to the DAMOX/DASOX family.</text>
</comment>
<comment type="caution">
    <text evidence="6">Was originally annotated as D-aspartate oxidase.</text>
</comment>
<comment type="caution">
    <text evidence="6">The gene for this protein is duplicated in strains AX3 and AX4. These strains contain a duplication of a segment of 750 kb of chromosome 2 compared to the corresponding sequence in strain AX2.</text>
</comment>
<proteinExistence type="evidence at protein level"/>
<feature type="chain" id="PRO_0000328215" description="D-amino-acid oxidase">
    <location>
        <begin position="1"/>
        <end position="346"/>
    </location>
</feature>
<feature type="short sequence motif" description="Microbody targeting signal" evidence="4">
    <location>
        <begin position="344"/>
        <end position="346"/>
    </location>
</feature>
<feature type="binding site" evidence="3">
    <location>
        <position position="22"/>
    </location>
    <ligand>
        <name>FAD</name>
        <dbReference type="ChEBI" id="CHEBI:57692"/>
    </ligand>
</feature>
<feature type="binding site" evidence="3">
    <location>
        <position position="24"/>
    </location>
    <ligand>
        <name>FAD</name>
        <dbReference type="ChEBI" id="CHEBI:57692"/>
    </ligand>
</feature>
<feature type="binding site" evidence="3">
    <location>
        <position position="52"/>
    </location>
    <ligand>
        <name>FAD</name>
        <dbReference type="ChEBI" id="CHEBI:57692"/>
    </ligand>
</feature>
<feature type="binding site" evidence="3">
    <location>
        <position position="53"/>
    </location>
    <ligand>
        <name>FAD</name>
        <dbReference type="ChEBI" id="CHEBI:57692"/>
    </ligand>
</feature>
<feature type="binding site" evidence="3">
    <location>
        <position position="54"/>
    </location>
    <ligand>
        <name>FAD</name>
        <dbReference type="ChEBI" id="CHEBI:57692"/>
    </ligand>
</feature>
<feature type="binding site" evidence="2">
    <location>
        <position position="58"/>
    </location>
    <ligand>
        <name>FAD</name>
        <dbReference type="ChEBI" id="CHEBI:57692"/>
    </ligand>
</feature>
<feature type="binding site" evidence="3">
    <location>
        <position position="59"/>
    </location>
    <ligand>
        <name>FAD</name>
        <dbReference type="ChEBI" id="CHEBI:57692"/>
    </ligand>
</feature>
<feature type="binding site" evidence="3">
    <location>
        <position position="60"/>
    </location>
    <ligand>
        <name>FAD</name>
        <dbReference type="ChEBI" id="CHEBI:57692"/>
    </ligand>
</feature>
<feature type="binding site" evidence="3">
    <location>
        <position position="187"/>
    </location>
    <ligand>
        <name>FAD</name>
        <dbReference type="ChEBI" id="CHEBI:57692"/>
    </ligand>
</feature>
<feature type="binding site" evidence="2">
    <location>
        <position position="227"/>
    </location>
    <ligand>
        <name>D-proline</name>
        <dbReference type="ChEBI" id="CHEBI:57726"/>
    </ligand>
</feature>
<feature type="binding site" evidence="3">
    <location>
        <position position="227"/>
    </location>
    <ligand>
        <name>D-serine</name>
        <dbReference type="ChEBI" id="CHEBI:35247"/>
    </ligand>
</feature>
<feature type="binding site" evidence="3">
    <location>
        <position position="284"/>
    </location>
    <ligand>
        <name>D-dopa</name>
        <dbReference type="ChEBI" id="CHEBI:149689"/>
    </ligand>
</feature>
<feature type="binding site" evidence="2">
    <location>
        <position position="284"/>
    </location>
    <ligand>
        <name>D-proline</name>
        <dbReference type="ChEBI" id="CHEBI:57726"/>
    </ligand>
</feature>
<feature type="binding site" evidence="3">
    <location>
        <position position="284"/>
    </location>
    <ligand>
        <name>D-serine</name>
        <dbReference type="ChEBI" id="CHEBI:35247"/>
    </ligand>
</feature>
<feature type="binding site" evidence="3">
    <location>
        <position position="284"/>
    </location>
    <ligand>
        <name>FAD</name>
        <dbReference type="ChEBI" id="CHEBI:57692"/>
    </ligand>
</feature>
<feature type="binding site" evidence="3">
    <location>
        <position position="311"/>
    </location>
    <ligand>
        <name>FAD</name>
        <dbReference type="ChEBI" id="CHEBI:57692"/>
    </ligand>
</feature>
<feature type="binding site" evidence="3">
    <location>
        <position position="312"/>
    </location>
    <ligand>
        <name>D-dopa</name>
        <dbReference type="ChEBI" id="CHEBI:149689"/>
    </ligand>
</feature>
<feature type="binding site" evidence="2">
    <location>
        <position position="312"/>
    </location>
    <ligand>
        <name>D-proline</name>
        <dbReference type="ChEBI" id="CHEBI:57726"/>
    </ligand>
</feature>
<feature type="binding site" evidence="3">
    <location>
        <position position="312"/>
    </location>
    <ligand>
        <name>D-serine</name>
        <dbReference type="ChEBI" id="CHEBI:35247"/>
    </ligand>
</feature>
<feature type="binding site" evidence="3">
    <location>
        <position position="312"/>
    </location>
    <ligand>
        <name>FAD</name>
        <dbReference type="ChEBI" id="CHEBI:57692"/>
    </ligand>
</feature>
<feature type="binding site" evidence="3">
    <location>
        <position position="314"/>
    </location>
    <ligand>
        <name>FAD</name>
        <dbReference type="ChEBI" id="CHEBI:57692"/>
    </ligand>
</feature>
<feature type="binding site" evidence="3">
    <location>
        <position position="316"/>
    </location>
    <ligand>
        <name>FAD</name>
        <dbReference type="ChEBI" id="CHEBI:57692"/>
    </ligand>
</feature>
<keyword id="KW-0274">FAD</keyword>
<keyword id="KW-0285">Flavoprotein</keyword>
<keyword id="KW-0560">Oxidoreductase</keyword>
<keyword id="KW-0576">Peroxisome</keyword>
<keyword id="KW-1185">Reference proteome</keyword>